<feature type="chain" id="PRO_1000067174" description="HPr kinase/phosphorylase">
    <location>
        <begin position="1"/>
        <end position="311"/>
    </location>
</feature>
<feature type="region of interest" description="Important for the catalytic mechanism of both phosphorylation and dephosphorylation" evidence="1">
    <location>
        <begin position="201"/>
        <end position="210"/>
    </location>
</feature>
<feature type="region of interest" description="Important for the catalytic mechanism of dephosphorylation" evidence="1">
    <location>
        <begin position="264"/>
        <end position="269"/>
    </location>
</feature>
<feature type="active site" evidence="1">
    <location>
        <position position="138"/>
    </location>
</feature>
<feature type="active site" evidence="1">
    <location>
        <position position="159"/>
    </location>
</feature>
<feature type="active site" description="Proton acceptor; for phosphorylation activity. Proton donor; for dephosphorylation activity" evidence="1">
    <location>
        <position position="177"/>
    </location>
</feature>
<feature type="active site" evidence="1">
    <location>
        <position position="243"/>
    </location>
</feature>
<feature type="binding site" evidence="1">
    <location>
        <begin position="153"/>
        <end position="160"/>
    </location>
    <ligand>
        <name>ATP</name>
        <dbReference type="ChEBI" id="CHEBI:30616"/>
    </ligand>
</feature>
<feature type="binding site" evidence="1">
    <location>
        <position position="160"/>
    </location>
    <ligand>
        <name>Mg(2+)</name>
        <dbReference type="ChEBI" id="CHEBI:18420"/>
    </ligand>
</feature>
<feature type="binding site" evidence="1">
    <location>
        <position position="202"/>
    </location>
    <ligand>
        <name>Mg(2+)</name>
        <dbReference type="ChEBI" id="CHEBI:18420"/>
    </ligand>
</feature>
<name>HPRK_STRA1</name>
<proteinExistence type="inferred from homology"/>
<sequence>MAVTVQMLVDRLKLNVIYGDEHLLSKRITTADISRPGLEMTGYFDYYAPERLQLVGMKEWSYLMAMTGHNRYQVLREMFQKETPAIVVARDLEIPEEMYEAAKDTGIAILQSKAPTSRLSGEVSWYLDSCLAERTSVHGVLMDIYGMGVLIQGDSGIGKSETGLELVKRGHRLVADDRVDVYAKDEETLWGEPAEILRHLLEIRGVGIIDIMSLYGASAVKDSSQVQLAIYLENFETGKVFDRLGNGNEEIELSGVKVPRIRIPVKTGRNVSVVIEAAAMNHRAKQMGFDATQTFEDRLTHLISQNEVNDD</sequence>
<keyword id="KW-0067">ATP-binding</keyword>
<keyword id="KW-0119">Carbohydrate metabolism</keyword>
<keyword id="KW-0418">Kinase</keyword>
<keyword id="KW-0460">Magnesium</keyword>
<keyword id="KW-0479">Metal-binding</keyword>
<keyword id="KW-0511">Multifunctional enzyme</keyword>
<keyword id="KW-0547">Nucleotide-binding</keyword>
<keyword id="KW-0723">Serine/threonine-protein kinase</keyword>
<keyword id="KW-0808">Transferase</keyword>
<dbReference type="EC" id="2.7.11.-" evidence="1"/>
<dbReference type="EC" id="2.7.4.-" evidence="1"/>
<dbReference type="EMBL" id="CP000114">
    <property type="protein sequence ID" value="ABA45833.1"/>
    <property type="molecule type" value="Genomic_DNA"/>
</dbReference>
<dbReference type="RefSeq" id="WP_000301753.1">
    <property type="nucleotide sequence ID" value="NC_007432.1"/>
</dbReference>
<dbReference type="SMR" id="Q3K1W9"/>
<dbReference type="GeneID" id="66885689"/>
<dbReference type="KEGG" id="sak:SAK_0862"/>
<dbReference type="HOGENOM" id="CLU_052030_0_1_9"/>
<dbReference type="GO" id="GO:0005524">
    <property type="term" value="F:ATP binding"/>
    <property type="evidence" value="ECO:0007669"/>
    <property type="project" value="UniProtKB-UniRule"/>
</dbReference>
<dbReference type="GO" id="GO:0000287">
    <property type="term" value="F:magnesium ion binding"/>
    <property type="evidence" value="ECO:0007669"/>
    <property type="project" value="UniProtKB-UniRule"/>
</dbReference>
<dbReference type="GO" id="GO:0000155">
    <property type="term" value="F:phosphorelay sensor kinase activity"/>
    <property type="evidence" value="ECO:0007669"/>
    <property type="project" value="InterPro"/>
</dbReference>
<dbReference type="GO" id="GO:0004674">
    <property type="term" value="F:protein serine/threonine kinase activity"/>
    <property type="evidence" value="ECO:0007669"/>
    <property type="project" value="UniProtKB-KW"/>
</dbReference>
<dbReference type="GO" id="GO:0004712">
    <property type="term" value="F:protein serine/threonine/tyrosine kinase activity"/>
    <property type="evidence" value="ECO:0007669"/>
    <property type="project" value="UniProtKB-UniRule"/>
</dbReference>
<dbReference type="GO" id="GO:0006109">
    <property type="term" value="P:regulation of carbohydrate metabolic process"/>
    <property type="evidence" value="ECO:0007669"/>
    <property type="project" value="UniProtKB-UniRule"/>
</dbReference>
<dbReference type="CDD" id="cd01918">
    <property type="entry name" value="HprK_C"/>
    <property type="match status" value="1"/>
</dbReference>
<dbReference type="FunFam" id="3.40.50.300:FF:000174">
    <property type="entry name" value="HPr kinase/phosphorylase"/>
    <property type="match status" value="1"/>
</dbReference>
<dbReference type="Gene3D" id="3.40.1390.20">
    <property type="entry name" value="HprK N-terminal domain-like"/>
    <property type="match status" value="1"/>
</dbReference>
<dbReference type="Gene3D" id="3.40.50.300">
    <property type="entry name" value="P-loop containing nucleotide triphosphate hydrolases"/>
    <property type="match status" value="1"/>
</dbReference>
<dbReference type="HAMAP" id="MF_01249">
    <property type="entry name" value="HPr_kinase"/>
    <property type="match status" value="1"/>
</dbReference>
<dbReference type="InterPro" id="IPR003755">
    <property type="entry name" value="HPr(Ser)_kin/Pase"/>
</dbReference>
<dbReference type="InterPro" id="IPR011104">
    <property type="entry name" value="Hpr_kin/Pase_C"/>
</dbReference>
<dbReference type="InterPro" id="IPR011126">
    <property type="entry name" value="Hpr_kin/Pase_Hpr_N"/>
</dbReference>
<dbReference type="InterPro" id="IPR027417">
    <property type="entry name" value="P-loop_NTPase"/>
</dbReference>
<dbReference type="InterPro" id="IPR028979">
    <property type="entry name" value="Ser_kin/Pase_Hpr-like_N_sf"/>
</dbReference>
<dbReference type="NCBIfam" id="TIGR00679">
    <property type="entry name" value="hpr-ser"/>
    <property type="match status" value="1"/>
</dbReference>
<dbReference type="PANTHER" id="PTHR30305:SF1">
    <property type="entry name" value="HPR KINASE_PHOSPHORYLASE"/>
    <property type="match status" value="1"/>
</dbReference>
<dbReference type="PANTHER" id="PTHR30305">
    <property type="entry name" value="PROTEIN YJDM-RELATED"/>
    <property type="match status" value="1"/>
</dbReference>
<dbReference type="Pfam" id="PF07475">
    <property type="entry name" value="Hpr_kinase_C"/>
    <property type="match status" value="1"/>
</dbReference>
<dbReference type="Pfam" id="PF02603">
    <property type="entry name" value="Hpr_kinase_N"/>
    <property type="match status" value="1"/>
</dbReference>
<dbReference type="SUPFAM" id="SSF75138">
    <property type="entry name" value="HprK N-terminal domain-like"/>
    <property type="match status" value="1"/>
</dbReference>
<dbReference type="SUPFAM" id="SSF53795">
    <property type="entry name" value="PEP carboxykinase-like"/>
    <property type="match status" value="1"/>
</dbReference>
<reference key="1">
    <citation type="journal article" date="2005" name="Proc. Natl. Acad. Sci. U.S.A.">
        <title>Genome analysis of multiple pathogenic isolates of Streptococcus agalactiae: implications for the microbial 'pan-genome'.</title>
        <authorList>
            <person name="Tettelin H."/>
            <person name="Masignani V."/>
            <person name="Cieslewicz M.J."/>
            <person name="Donati C."/>
            <person name="Medini D."/>
            <person name="Ward N.L."/>
            <person name="Angiuoli S.V."/>
            <person name="Crabtree J."/>
            <person name="Jones A.L."/>
            <person name="Durkin A.S."/>
            <person name="DeBoy R.T."/>
            <person name="Davidsen T.M."/>
            <person name="Mora M."/>
            <person name="Scarselli M."/>
            <person name="Margarit y Ros I."/>
            <person name="Peterson J.D."/>
            <person name="Hauser C.R."/>
            <person name="Sundaram J.P."/>
            <person name="Nelson W.C."/>
            <person name="Madupu R."/>
            <person name="Brinkac L.M."/>
            <person name="Dodson R.J."/>
            <person name="Rosovitz M.J."/>
            <person name="Sullivan S.A."/>
            <person name="Daugherty S.C."/>
            <person name="Haft D.H."/>
            <person name="Selengut J."/>
            <person name="Gwinn M.L."/>
            <person name="Zhou L."/>
            <person name="Zafar N."/>
            <person name="Khouri H."/>
            <person name="Radune D."/>
            <person name="Dimitrov G."/>
            <person name="Watkins K."/>
            <person name="O'Connor K.J."/>
            <person name="Smith S."/>
            <person name="Utterback T.R."/>
            <person name="White O."/>
            <person name="Rubens C.E."/>
            <person name="Grandi G."/>
            <person name="Madoff L.C."/>
            <person name="Kasper D.L."/>
            <person name="Telford J.L."/>
            <person name="Wessels M.R."/>
            <person name="Rappuoli R."/>
            <person name="Fraser C.M."/>
        </authorList>
    </citation>
    <scope>NUCLEOTIDE SEQUENCE [LARGE SCALE GENOMIC DNA]</scope>
    <source>
        <strain>ATCC 27591 / A909 / CDC SS700</strain>
    </source>
</reference>
<evidence type="ECO:0000255" key="1">
    <source>
        <dbReference type="HAMAP-Rule" id="MF_01249"/>
    </source>
</evidence>
<comment type="function">
    <text evidence="1">Catalyzes the ATP- as well as the pyrophosphate-dependent phosphorylation of a specific serine residue in HPr, a phosphocarrier protein of the phosphoenolpyruvate-dependent sugar phosphotransferase system (PTS). HprK/P also catalyzes the pyrophosphate-producing, inorganic phosphate-dependent dephosphorylation (phosphorolysis) of seryl-phosphorylated HPr (P-Ser-HPr). The two antagonistic activities of HprK/P are regulated by several intracellular metabolites, which change their concentration in response to the absence or presence of rapidly metabolisable carbon sources (glucose, fructose, etc.) in the growth medium. Therefore, by controlling the phosphorylation state of HPr, HPrK/P is a sensor enzyme that plays a major role in the regulation of carbon metabolism and sugar transport: it mediates carbon catabolite repression (CCR), and regulates PTS-catalyzed carbohydrate uptake and inducer exclusion.</text>
</comment>
<comment type="catalytic activity">
    <reaction evidence="1">
        <text>[HPr protein]-L-serine + ATP = [HPr protein]-O-phospho-L-serine + ADP + H(+)</text>
        <dbReference type="Rhea" id="RHEA:46600"/>
        <dbReference type="Rhea" id="RHEA-COMP:11602"/>
        <dbReference type="Rhea" id="RHEA-COMP:11603"/>
        <dbReference type="ChEBI" id="CHEBI:15378"/>
        <dbReference type="ChEBI" id="CHEBI:29999"/>
        <dbReference type="ChEBI" id="CHEBI:30616"/>
        <dbReference type="ChEBI" id="CHEBI:83421"/>
        <dbReference type="ChEBI" id="CHEBI:456216"/>
    </reaction>
</comment>
<comment type="catalytic activity">
    <reaction evidence="1">
        <text>[HPr protein]-O-phospho-L-serine + phosphate + H(+) = [HPr protein]-L-serine + diphosphate</text>
        <dbReference type="Rhea" id="RHEA:46604"/>
        <dbReference type="Rhea" id="RHEA-COMP:11602"/>
        <dbReference type="Rhea" id="RHEA-COMP:11603"/>
        <dbReference type="ChEBI" id="CHEBI:15378"/>
        <dbReference type="ChEBI" id="CHEBI:29999"/>
        <dbReference type="ChEBI" id="CHEBI:33019"/>
        <dbReference type="ChEBI" id="CHEBI:43474"/>
        <dbReference type="ChEBI" id="CHEBI:83421"/>
    </reaction>
</comment>
<comment type="cofactor">
    <cofactor evidence="1">
        <name>Mg(2+)</name>
        <dbReference type="ChEBI" id="CHEBI:18420"/>
    </cofactor>
</comment>
<comment type="subunit">
    <text evidence="1">Homohexamer.</text>
</comment>
<comment type="domain">
    <text evidence="1">The Walker A ATP-binding motif also binds Pi and PPi.</text>
</comment>
<comment type="miscellaneous">
    <text evidence="1">Both phosphorylation and phosphorolysis are carried out by the same active site and suggest a common mechanism for both reactions.</text>
</comment>
<comment type="similarity">
    <text evidence="1">Belongs to the HPrK/P family.</text>
</comment>
<organism>
    <name type="scientific">Streptococcus agalactiae serotype Ia (strain ATCC 27591 / A909 / CDC SS700)</name>
    <dbReference type="NCBI Taxonomy" id="205921"/>
    <lineage>
        <taxon>Bacteria</taxon>
        <taxon>Bacillati</taxon>
        <taxon>Bacillota</taxon>
        <taxon>Bacilli</taxon>
        <taxon>Lactobacillales</taxon>
        <taxon>Streptococcaceae</taxon>
        <taxon>Streptococcus</taxon>
    </lineage>
</organism>
<gene>
    <name evidence="1" type="primary">hprK</name>
    <name type="ordered locus">SAK_0862</name>
</gene>
<protein>
    <recommendedName>
        <fullName evidence="1">HPr kinase/phosphorylase</fullName>
        <shortName evidence="1">HPrK/P</shortName>
        <ecNumber evidence="1">2.7.11.-</ecNumber>
        <ecNumber evidence="1">2.7.4.-</ecNumber>
    </recommendedName>
    <alternativeName>
        <fullName evidence="1">HPr(Ser) kinase/phosphorylase</fullName>
    </alternativeName>
</protein>
<accession>Q3K1W9</accession>